<protein>
    <recommendedName>
        <fullName>Dendrin</fullName>
    </recommendedName>
</protein>
<gene>
    <name type="primary">Ddn</name>
    <name type="synonym">Den</name>
</gene>
<dbReference type="EMBL" id="X96589">
    <property type="protein sequence ID" value="CAA65407.1"/>
    <property type="status" value="ALT_FRAME"/>
    <property type="molecule type" value="mRNA"/>
</dbReference>
<dbReference type="EMBL" id="Y09000">
    <property type="protein sequence ID" value="CAA70204.1"/>
    <property type="status" value="ALT_INIT"/>
    <property type="molecule type" value="mRNA"/>
</dbReference>
<dbReference type="RefSeq" id="NP_112255.1">
    <property type="nucleotide sequence ID" value="NM_030993.1"/>
</dbReference>
<dbReference type="RefSeq" id="XP_008763894.1">
    <property type="nucleotide sequence ID" value="XM_008765672.2"/>
</dbReference>
<dbReference type="BioGRID" id="247185">
    <property type="interactions" value="1"/>
</dbReference>
<dbReference type="FunCoup" id="P50617">
    <property type="interactions" value="307"/>
</dbReference>
<dbReference type="IntAct" id="P50617">
    <property type="interactions" value="1"/>
</dbReference>
<dbReference type="STRING" id="10116.ENSRNOP00000069004"/>
<dbReference type="iPTMnet" id="P50617"/>
<dbReference type="PhosphoSitePlus" id="P50617"/>
<dbReference type="PaxDb" id="10116-ENSRNOP00000019854"/>
<dbReference type="Ensembl" id="ENSRNOT00000089060.2">
    <property type="protein sequence ID" value="ENSRNOP00000069004.2"/>
    <property type="gene ID" value="ENSRNOG00000059605.2"/>
</dbReference>
<dbReference type="GeneID" id="25113"/>
<dbReference type="KEGG" id="rno:25113"/>
<dbReference type="UCSC" id="RGD:2497">
    <property type="organism name" value="rat"/>
</dbReference>
<dbReference type="AGR" id="RGD:2497"/>
<dbReference type="CTD" id="23109"/>
<dbReference type="RGD" id="2497">
    <property type="gene designation" value="Ddn"/>
</dbReference>
<dbReference type="eggNOG" id="ENOG502SA8Z">
    <property type="taxonomic scope" value="Eukaryota"/>
</dbReference>
<dbReference type="GeneTree" id="ENSGT00390000016495"/>
<dbReference type="InParanoid" id="P50617"/>
<dbReference type="OMA" id="TPQGNRE"/>
<dbReference type="OrthoDB" id="9900378at2759"/>
<dbReference type="PhylomeDB" id="P50617"/>
<dbReference type="TreeFam" id="TF337173"/>
<dbReference type="PRO" id="PR:P50617"/>
<dbReference type="Proteomes" id="UP000002494">
    <property type="component" value="Chromosome 7"/>
</dbReference>
<dbReference type="GO" id="GO:0042995">
    <property type="term" value="C:cell projection"/>
    <property type="evidence" value="ECO:0000266"/>
    <property type="project" value="RGD"/>
</dbReference>
<dbReference type="GO" id="GO:0005737">
    <property type="term" value="C:cytoplasm"/>
    <property type="evidence" value="ECO:0000266"/>
    <property type="project" value="RGD"/>
</dbReference>
<dbReference type="GO" id="GO:0030425">
    <property type="term" value="C:dendrite"/>
    <property type="evidence" value="ECO:0000314"/>
    <property type="project" value="MGI"/>
</dbReference>
<dbReference type="GO" id="GO:0043197">
    <property type="term" value="C:dendritic spine"/>
    <property type="evidence" value="ECO:0000304"/>
    <property type="project" value="RGD"/>
</dbReference>
<dbReference type="GO" id="GO:0032591">
    <property type="term" value="C:dendritic spine membrane"/>
    <property type="evidence" value="ECO:0007669"/>
    <property type="project" value="UniProtKB-SubCell"/>
</dbReference>
<dbReference type="GO" id="GO:0005789">
    <property type="term" value="C:endoplasmic reticulum membrane"/>
    <property type="evidence" value="ECO:0007669"/>
    <property type="project" value="UniProtKB-SubCell"/>
</dbReference>
<dbReference type="GO" id="GO:0005634">
    <property type="term" value="C:nucleus"/>
    <property type="evidence" value="ECO:0000266"/>
    <property type="project" value="RGD"/>
</dbReference>
<dbReference type="GO" id="GO:0043204">
    <property type="term" value="C:perikaryon"/>
    <property type="evidence" value="ECO:0007669"/>
    <property type="project" value="UniProtKB-SubCell"/>
</dbReference>
<dbReference type="GO" id="GO:0005886">
    <property type="term" value="C:plasma membrane"/>
    <property type="evidence" value="ECO:0000266"/>
    <property type="project" value="RGD"/>
</dbReference>
<dbReference type="GO" id="GO:0098794">
    <property type="term" value="C:postsynapse"/>
    <property type="evidence" value="ECO:0000314"/>
    <property type="project" value="SynGO"/>
</dbReference>
<dbReference type="GO" id="GO:0045211">
    <property type="term" value="C:postsynaptic membrane"/>
    <property type="evidence" value="ECO:0007669"/>
    <property type="project" value="UniProtKB-KW"/>
</dbReference>
<dbReference type="GO" id="GO:0098793">
    <property type="term" value="C:presynapse"/>
    <property type="evidence" value="ECO:0000314"/>
    <property type="project" value="SynGO"/>
</dbReference>
<dbReference type="GO" id="GO:0000981">
    <property type="term" value="F:DNA-binding transcription factor activity, RNA polymerase II-specific"/>
    <property type="evidence" value="ECO:0000314"/>
    <property type="project" value="MGI"/>
</dbReference>
<dbReference type="GO" id="GO:0000978">
    <property type="term" value="F:RNA polymerase II cis-regulatory region sequence-specific DNA binding"/>
    <property type="evidence" value="ECO:0000314"/>
    <property type="project" value="MGI"/>
</dbReference>
<dbReference type="GO" id="GO:0045944">
    <property type="term" value="P:positive regulation of transcription by RNA polymerase II"/>
    <property type="evidence" value="ECO:0000314"/>
    <property type="project" value="MGI"/>
</dbReference>
<dbReference type="InterPro" id="IPR026500">
    <property type="entry name" value="Dendrin"/>
</dbReference>
<dbReference type="PANTHER" id="PTHR16757">
    <property type="entry name" value="DENDRIN"/>
    <property type="match status" value="1"/>
</dbReference>
<dbReference type="PANTHER" id="PTHR16757:SF1">
    <property type="entry name" value="DENDRIN"/>
    <property type="match status" value="1"/>
</dbReference>
<dbReference type="Pfam" id="PF15498">
    <property type="entry name" value="Dendrin"/>
    <property type="match status" value="1"/>
</dbReference>
<accession>P50617</accession>
<accession>P97543</accession>
<feature type="chain" id="PRO_0000079863" description="Dendrin">
    <location>
        <begin position="1"/>
        <end position="707"/>
    </location>
</feature>
<feature type="region of interest" description="Disordered" evidence="4">
    <location>
        <begin position="1"/>
        <end position="22"/>
    </location>
</feature>
<feature type="region of interest" description="Disordered" evidence="4">
    <location>
        <begin position="67"/>
        <end position="86"/>
    </location>
</feature>
<feature type="region of interest" description="Disordered" evidence="4">
    <location>
        <begin position="94"/>
        <end position="195"/>
    </location>
</feature>
<feature type="region of interest" description="Nuclear localization">
    <location>
        <begin position="113"/>
        <end position="131"/>
    </location>
</feature>
<feature type="region of interest" description="Interaction with MAGI2" evidence="1">
    <location>
        <begin position="186"/>
        <end position="236"/>
    </location>
</feature>
<feature type="region of interest" description="Disordered" evidence="4">
    <location>
        <begin position="213"/>
        <end position="273"/>
    </location>
</feature>
<feature type="region of interest" description="Interaction with ACTN1" evidence="1">
    <location>
        <begin position="340"/>
        <end position="434"/>
    </location>
</feature>
<feature type="region of interest" description="Disordered" evidence="4">
    <location>
        <begin position="342"/>
        <end position="377"/>
    </location>
</feature>
<feature type="region of interest" description="Disordered" evidence="4">
    <location>
        <begin position="389"/>
        <end position="421"/>
    </location>
</feature>
<feature type="region of interest" description="Interaction with CD2AP and NPHS1" evidence="6">
    <location>
        <begin position="406"/>
        <end position="707"/>
    </location>
</feature>
<feature type="region of interest" description="Disordered" evidence="4">
    <location>
        <begin position="517"/>
        <end position="707"/>
    </location>
</feature>
<feature type="coiled-coil region" evidence="3">
    <location>
        <begin position="103"/>
        <end position="134"/>
    </location>
</feature>
<feature type="compositionally biased region" description="Basic and acidic residues" evidence="4">
    <location>
        <begin position="105"/>
        <end position="127"/>
    </location>
</feature>
<feature type="compositionally biased region" description="Basic residues" evidence="4">
    <location>
        <begin position="359"/>
        <end position="369"/>
    </location>
</feature>
<feature type="compositionally biased region" description="Basic and acidic residues" evidence="4">
    <location>
        <begin position="524"/>
        <end position="544"/>
    </location>
</feature>
<feature type="compositionally biased region" description="Basic and acidic residues" evidence="4">
    <location>
        <begin position="692"/>
        <end position="707"/>
    </location>
</feature>
<feature type="modified residue" description="Phosphoserine" evidence="2">
    <location>
        <position position="387"/>
    </location>
</feature>
<feature type="sequence conflict" description="In Ref. 1; CAA65407." evidence="10" ref="1">
    <original>G</original>
    <variation>D</variation>
    <location>
        <position position="195"/>
    </location>
</feature>
<keyword id="KW-1003">Cell membrane</keyword>
<keyword id="KW-0966">Cell projection</keyword>
<keyword id="KW-0175">Coiled coil</keyword>
<keyword id="KW-0963">Cytoplasm</keyword>
<keyword id="KW-0256">Endoplasmic reticulum</keyword>
<keyword id="KW-0472">Membrane</keyword>
<keyword id="KW-0539">Nucleus</keyword>
<keyword id="KW-0597">Phosphoprotein</keyword>
<keyword id="KW-0628">Postsynaptic cell membrane</keyword>
<keyword id="KW-1185">Reference proteome</keyword>
<keyword id="KW-0770">Synapse</keyword>
<reference key="1">
    <citation type="journal article" date="1996" name="J. Neurosci. Res.">
        <title>Characterization and sleep deprivation-induced expression modulation of dendrin, a novel dendritic protein in rat brain neurons.</title>
        <authorList>
            <person name="Neuner-Jehle M."/>
            <person name="Denizot J.-P."/>
            <person name="Borbely A.A."/>
            <person name="Mallet J."/>
        </authorList>
    </citation>
    <scope>NUCLEOTIDE SEQUENCE [MRNA]</scope>
    <scope>SUBCELLULAR LOCATION</scope>
    <scope>TISSUE SPECIFICITY</scope>
    <source>
        <strain>Sprague-Dawley</strain>
        <tissue>Brain</tissue>
    </source>
</reference>
<reference key="2">
    <citation type="journal article" date="1997" name="Mol. Cell. Neurosci.">
        <title>Prominent dendritic localization in forebrain neurons of a novel mRNA and its product, dendrin.</title>
        <authorList>
            <person name="Herb A."/>
            <person name="Wisden W."/>
            <person name="Catania M.V."/>
            <person name="Marechal D."/>
            <person name="Dresse A."/>
            <person name="Seeburg P.H."/>
        </authorList>
    </citation>
    <scope>NUCLEOTIDE SEQUENCE [MRNA] OF 6-707</scope>
    <scope>SUBCELLULAR LOCATION</scope>
    <scope>TISSUE SPECIFICITY</scope>
    <source>
        <tissue>Brain</tissue>
    </source>
</reference>
<reference key="3">
    <citation type="journal article" date="2006" name="J. Biochem.">
        <title>CIN85 is localized at synapses and forms a complex with S-SCAM via dendrin.</title>
        <authorList>
            <person name="Kawata A."/>
            <person name="Iida J."/>
            <person name="Ikeda M."/>
            <person name="Sato Y."/>
            <person name="Mori H."/>
            <person name="Kansaku A."/>
            <person name="Sumita K."/>
            <person name="Fujiwara N."/>
            <person name="Rokukawa C."/>
            <person name="Hamano M."/>
            <person name="Hirabayashi S."/>
            <person name="Hata Y."/>
        </authorList>
    </citation>
    <scope>INTERACTION WITH MAGI1 AND MAGI2</scope>
    <scope>TISSUE SPECIFICITY</scope>
</reference>
<reference key="4">
    <citation type="journal article" date="2007" name="Proc. Natl. Acad. Sci. U.S.A.">
        <title>Nuclear relocation of the nephrin and CD2AP-binding protein dendrin promotes apoptosis of podocytes.</title>
        <authorList>
            <person name="Asanuma K."/>
            <person name="Campbell K.N."/>
            <person name="Kim K."/>
            <person name="Faul C."/>
            <person name="Mundel P."/>
        </authorList>
    </citation>
    <scope>INTERACTION WITH CD2AP; NPHS1 AND NPHS2</scope>
</reference>
<reference key="5">
    <citation type="journal article" date="2008" name="Eur. J. Neurosci.">
        <title>The dendritically targeted protein Dendrin is induced by acute nicotine in cortical regions of adolescent rat brain.</title>
        <authorList>
            <person name="Schochet T.L."/>
            <person name="Bremer Q.Z."/>
            <person name="Brownfield M.S."/>
            <person name="Kelley A.E."/>
            <person name="Landry C.F."/>
        </authorList>
    </citation>
    <scope>INDUCTION BY NICOTINE</scope>
</reference>
<comment type="function">
    <text>Promotes apoptosis of kidney glomerular podocytes. Podocytes are highly specialized cells essential to the ultrafiltration of blood, resulting in the extraction of urine and the retention of protein.</text>
</comment>
<comment type="subunit">
    <text evidence="1 5 6">Forms a ternary complex with MAGI2 and SH3KBP1; recruits DDN to the cytoplasm. Interacts with MAGI1. Interacts with ACTN1 and may interact with WWC1 (By similarity). Interacts with the podocyte slit diaphragm proteins CD2AP, NPHS1 and NPHS2; the interaction with CD2AP and NPHS1 is direct.</text>
</comment>
<comment type="subcellular location">
    <subcellularLocation>
        <location>Cell projection</location>
        <location>Dendritic spine membrane</location>
        <topology>Peripheral membrane protein</topology>
    </subcellularLocation>
    <subcellularLocation>
        <location evidence="1">Cytoplasm</location>
    </subcellularLocation>
    <subcellularLocation>
        <location>Endoplasmic reticulum membrane</location>
        <topology>Peripheral membrane protein</topology>
        <orientation>Cytoplasmic side</orientation>
    </subcellularLocation>
    <subcellularLocation>
        <location>Perikaryon</location>
    </subcellularLocation>
    <subcellularLocation>
        <location evidence="1">Nucleus</location>
    </subcellularLocation>
    <text evidence="1">Enriched at the cytoplasmic insertion of the slit diaphragm into the foot process of podocytes and associated with polyribosomes in dendrites.</text>
</comment>
<comment type="tissue specificity">
    <text evidence="5 8 9">Specifically expressed in forebrain structures, particularly in neocortex, olfactory bulb, hippocampus, caudate-putamen, and limbic system (at protein level). Also detected in spleen, liver, kidney and placenta (at protein level).</text>
</comment>
<comment type="induction">
    <text evidence="7">By sleep deprivation. By acute nicotine in adolescent brain (at protein level).</text>
</comment>
<comment type="miscellaneous">
    <text>There are 2 forms of 81 kDa and 89 kDa detected in brain by an antibody raised against a C-terminal peptide arguing for alternative N-terminal sequences.</text>
</comment>
<comment type="sequence caution" evidence="10">
    <conflict type="frameshift">
        <sequence resource="EMBL-CDS" id="CAA65407"/>
    </conflict>
</comment>
<comment type="sequence caution" evidence="10">
    <conflict type="erroneous initiation">
        <sequence resource="EMBL-CDS" id="CAA70204"/>
    </conflict>
</comment>
<name>DEND_RAT</name>
<proteinExistence type="evidence at protein level"/>
<evidence type="ECO:0000250" key="1"/>
<evidence type="ECO:0000250" key="2">
    <source>
        <dbReference type="UniProtKB" id="Q80TS7"/>
    </source>
</evidence>
<evidence type="ECO:0000255" key="3"/>
<evidence type="ECO:0000256" key="4">
    <source>
        <dbReference type="SAM" id="MobiDB-lite"/>
    </source>
</evidence>
<evidence type="ECO:0000269" key="5">
    <source>
    </source>
</evidence>
<evidence type="ECO:0000269" key="6">
    <source>
    </source>
</evidence>
<evidence type="ECO:0000269" key="7">
    <source>
    </source>
</evidence>
<evidence type="ECO:0000269" key="8">
    <source>
    </source>
</evidence>
<evidence type="ECO:0000269" key="9">
    <source>
    </source>
</evidence>
<evidence type="ECO:0000305" key="10"/>
<organism>
    <name type="scientific">Rattus norvegicus</name>
    <name type="common">Rat</name>
    <dbReference type="NCBI Taxonomy" id="10116"/>
    <lineage>
        <taxon>Eukaryota</taxon>
        <taxon>Metazoa</taxon>
        <taxon>Chordata</taxon>
        <taxon>Craniata</taxon>
        <taxon>Vertebrata</taxon>
        <taxon>Euteleostomi</taxon>
        <taxon>Mammalia</taxon>
        <taxon>Eutheria</taxon>
        <taxon>Euarchontoglires</taxon>
        <taxon>Glires</taxon>
        <taxon>Rodentia</taxon>
        <taxon>Myomorpha</taxon>
        <taxon>Muroidea</taxon>
        <taxon>Muridae</taxon>
        <taxon>Murinae</taxon>
        <taxon>Rattus</taxon>
    </lineage>
</organism>
<sequence>MLDGPLFSEGPDSPRELQDEESGSCLWVQKSKLLVIEVKTISCHYSRRAASRQSMDIQASYWARGPQNRTCRLRPGSPEPPPRRPWASRVLQEATNWRAGPPAEVRAREQEKRKAASQEREAKETERKRRKAGGARRSPLGQPRPELRNALRAAQPTGFPVFSRPERFGQVGRAPRPSALPQGDPGVAWAGPWGGRRPGPPSYEAHLLLRGAAGTAPRRRWDRPPPYVAPPSYEGPHRTLGTKRGPELSRAPTSSAPVPATTRTEGGRTKKRLDPRIYRDVLGAWGLRQGRGLLGGAPGCAAARARPESCKGAVEKSSGLAAAGLNSGGDGHSQAKTTGPVTEVALSGSTISSPPRPVPRSRQHLRGSRKGKEGSEEMWLPTCWLSSPKKPPVRHSQTLPRPWAPGGTGWKESLGQREGTEHETLEVWKVTRRAHTLPRSSRGPAGREGIFVIDATCVVIKSQYVPTPRTQQRQLAPSGESCIVSDSLRQPKPCLEEEGKGAAANPSVCQKRLLSSRVLNPPSEGREFEAEGRQQGDSSLEERSSSGLGFPVGEVNPRDAPTHPGSPEHSTLGPAAPGCAGSVKGPEAAGVPRRAGGGWARTPGPYAGALREAVSRIRRHTAPDSDSDEAEDLSAHSGSSDGSDTDAPGASWRNERTLPAVGNTRPREGGKTAELGDSIGEILDVISQTEEGLVREDTRKTPQGKRE</sequence>